<organism>
    <name type="scientific">Emericella nidulans (strain FGSC A4 / ATCC 38163 / CBS 112.46 / NRRL 194 / M139)</name>
    <name type="common">Aspergillus nidulans</name>
    <dbReference type="NCBI Taxonomy" id="227321"/>
    <lineage>
        <taxon>Eukaryota</taxon>
        <taxon>Fungi</taxon>
        <taxon>Dikarya</taxon>
        <taxon>Ascomycota</taxon>
        <taxon>Pezizomycotina</taxon>
        <taxon>Eurotiomycetes</taxon>
        <taxon>Eurotiomycetidae</taxon>
        <taxon>Eurotiales</taxon>
        <taxon>Aspergillaceae</taxon>
        <taxon>Aspergillus</taxon>
        <taxon>Aspergillus subgen. Nidulantes</taxon>
    </lineage>
</organism>
<reference key="1">
    <citation type="journal article" date="2000" name="Nat. Cell Biol.">
        <title>A new self-assembled peroxisomal vesicle required for efficient resealing of the plasma membrane.</title>
        <authorList>
            <person name="Jedd G."/>
            <person name="Chua N.-H."/>
        </authorList>
    </citation>
    <scope>NUCLEOTIDE SEQUENCE [MRNA]</scope>
    <scope>FUNCTION</scope>
</reference>
<reference key="2">
    <citation type="journal article" date="2005" name="Nature">
        <title>Sequencing of Aspergillus nidulans and comparative analysis with A. fumigatus and A. oryzae.</title>
        <authorList>
            <person name="Galagan J.E."/>
            <person name="Calvo S.E."/>
            <person name="Cuomo C."/>
            <person name="Ma L.-J."/>
            <person name="Wortman J.R."/>
            <person name="Batzoglou S."/>
            <person name="Lee S.-I."/>
            <person name="Bastuerkmen M."/>
            <person name="Spevak C.C."/>
            <person name="Clutterbuck J."/>
            <person name="Kapitonov V."/>
            <person name="Jurka J."/>
            <person name="Scazzocchio C."/>
            <person name="Farman M.L."/>
            <person name="Butler J."/>
            <person name="Purcell S."/>
            <person name="Harris S."/>
            <person name="Braus G.H."/>
            <person name="Draht O."/>
            <person name="Busch S."/>
            <person name="D'Enfert C."/>
            <person name="Bouchier C."/>
            <person name="Goldman G.H."/>
            <person name="Bell-Pedersen D."/>
            <person name="Griffiths-Jones S."/>
            <person name="Doonan J.H."/>
            <person name="Yu J."/>
            <person name="Vienken K."/>
            <person name="Pain A."/>
            <person name="Freitag M."/>
            <person name="Selker E.U."/>
            <person name="Archer D.B."/>
            <person name="Penalva M.A."/>
            <person name="Oakley B.R."/>
            <person name="Momany M."/>
            <person name="Tanaka T."/>
            <person name="Kumagai T."/>
            <person name="Asai K."/>
            <person name="Machida M."/>
            <person name="Nierman W.C."/>
            <person name="Denning D.W."/>
            <person name="Caddick M.X."/>
            <person name="Hynes M."/>
            <person name="Paoletti M."/>
            <person name="Fischer R."/>
            <person name="Miller B.L."/>
            <person name="Dyer P.S."/>
            <person name="Sachs M.S."/>
            <person name="Osmani S.A."/>
            <person name="Birren B.W."/>
        </authorList>
    </citation>
    <scope>NUCLEOTIDE SEQUENCE [LARGE SCALE GENOMIC DNA]</scope>
    <source>
        <strain>FGSC A4 / ATCC 38163 / CBS 112.46 / NRRL 194 / M139</strain>
    </source>
</reference>
<reference key="3">
    <citation type="journal article" date="2009" name="Fungal Genet. Biol.">
        <title>The 2008 update of the Aspergillus nidulans genome annotation: a community effort.</title>
        <authorList>
            <person name="Wortman J.R."/>
            <person name="Gilsenan J.M."/>
            <person name="Joardar V."/>
            <person name="Deegan J."/>
            <person name="Clutterbuck J."/>
            <person name="Andersen M.R."/>
            <person name="Archer D."/>
            <person name="Bencina M."/>
            <person name="Braus G."/>
            <person name="Coutinho P."/>
            <person name="von Dohren H."/>
            <person name="Doonan J."/>
            <person name="Driessen A.J."/>
            <person name="Durek P."/>
            <person name="Espeso E."/>
            <person name="Fekete E."/>
            <person name="Flipphi M."/>
            <person name="Estrada C.G."/>
            <person name="Geysens S."/>
            <person name="Goldman G."/>
            <person name="de Groot P.W."/>
            <person name="Hansen K."/>
            <person name="Harris S.D."/>
            <person name="Heinekamp T."/>
            <person name="Helmstaedt K."/>
            <person name="Henrissat B."/>
            <person name="Hofmann G."/>
            <person name="Homan T."/>
            <person name="Horio T."/>
            <person name="Horiuchi H."/>
            <person name="James S."/>
            <person name="Jones M."/>
            <person name="Karaffa L."/>
            <person name="Karanyi Z."/>
            <person name="Kato M."/>
            <person name="Keller N."/>
            <person name="Kelly D.E."/>
            <person name="Kiel J.A."/>
            <person name="Kim J.M."/>
            <person name="van der Klei I.J."/>
            <person name="Klis F.M."/>
            <person name="Kovalchuk A."/>
            <person name="Krasevec N."/>
            <person name="Kubicek C.P."/>
            <person name="Liu B."/>
            <person name="Maccabe A."/>
            <person name="Meyer V."/>
            <person name="Mirabito P."/>
            <person name="Miskei M."/>
            <person name="Mos M."/>
            <person name="Mullins J."/>
            <person name="Nelson D.R."/>
            <person name="Nielsen J."/>
            <person name="Oakley B.R."/>
            <person name="Osmani S.A."/>
            <person name="Pakula T."/>
            <person name="Paszewski A."/>
            <person name="Paulsen I."/>
            <person name="Pilsyk S."/>
            <person name="Pocsi I."/>
            <person name="Punt P.J."/>
            <person name="Ram A.F."/>
            <person name="Ren Q."/>
            <person name="Robellet X."/>
            <person name="Robson G."/>
            <person name="Seiboth B."/>
            <person name="van Solingen P."/>
            <person name="Specht T."/>
            <person name="Sun J."/>
            <person name="Taheri-Talesh N."/>
            <person name="Takeshita N."/>
            <person name="Ussery D."/>
            <person name="vanKuyk P.A."/>
            <person name="Visser H."/>
            <person name="van de Vondervoort P.J."/>
            <person name="de Vries R.P."/>
            <person name="Walton J."/>
            <person name="Xiang X."/>
            <person name="Xiong Y."/>
            <person name="Zeng A.P."/>
            <person name="Brandt B.W."/>
            <person name="Cornell M.J."/>
            <person name="van den Hondel C.A."/>
            <person name="Visser J."/>
            <person name="Oliver S.G."/>
            <person name="Turner G."/>
        </authorList>
    </citation>
    <scope>GENOME REANNOTATION</scope>
    <source>
        <strain>FGSC A4 / ATCC 38163 / CBS 112.46 / NRRL 194 / M139</strain>
    </source>
</reference>
<name>HEX1_EMENI</name>
<accession>Q9P8K9</accession>
<accession>C8VAY2</accession>
<accession>Q5B435</accession>
<evidence type="ECO:0000250" key="1">
    <source>
        <dbReference type="UniProtKB" id="P87252"/>
    </source>
</evidence>
<evidence type="ECO:0000255" key="2"/>
<evidence type="ECO:0000269" key="3">
    <source>
    </source>
</evidence>
<evidence type="ECO:0000303" key="4">
    <source>
    </source>
</evidence>
<evidence type="ECO:0000305" key="5"/>
<sequence length="221" mass="25091">MGYYDDDGNYHSFRRGVERAVDRITHPFHHHHHDHHDHHREEVIVTDERGPVRYRDGVKENVRIVEPRGAAATTSETVPIPTHFIRVGDILVLQGRPCQVIRISSSPMTDQRRYTGVDLFTRELHEESSFVSNPKPSVVVQTMLGPVYKTYRILDIQEGTIVALTESGDVKSGIPVIPQGNLYQRIKDAFLEGRGSVRALVINDGGRELVVDYKIIHSSRL</sequence>
<comment type="function">
    <text evidence="3">Major component of Woronin bodies, fungal-specific organelles that occlude septal pores in order to separate intact from damaged compartments (PubMed:10783241). Hex1 binds directly or indirectly to the Woronin body tether that in turn is anchored at the rim of the septal pore (PubMed:10783241).</text>
</comment>
<comment type="subunit">
    <text evidence="1">Forms oligomers (By similarity). Self-assembles into hexagonal rods (By similarity).</text>
</comment>
<comment type="subcellular location">
    <subcellularLocation>
        <location evidence="1">Cell septum</location>
    </subcellularLocation>
    <text evidence="1">Localizes at Woronin bodies, fungal-specific organelles that plug the septal pore in case of physical damage.</text>
</comment>
<comment type="similarity">
    <text evidence="5">Belongs to the eIF-5A family. Hex1 subfamily.</text>
</comment>
<comment type="sequence caution" evidence="5">
    <conflict type="erroneous gene model prediction">
        <sequence resource="EMBL-CDS" id="CBF76981"/>
    </conflict>
</comment>
<protein>
    <recommendedName>
        <fullName evidence="4">Woronin body major protein</fullName>
    </recommendedName>
</protein>
<dbReference type="EMBL" id="AF239659">
    <property type="protein sequence ID" value="AAF67173.1"/>
    <property type="molecule type" value="mRNA"/>
</dbReference>
<dbReference type="EMBL" id="AACD01000080">
    <property type="protein sequence ID" value="EAA60737.1"/>
    <property type="molecule type" value="Genomic_DNA"/>
</dbReference>
<dbReference type="EMBL" id="BN001303">
    <property type="protein sequence ID" value="CBF76981.1"/>
    <property type="status" value="ALT_SEQ"/>
    <property type="molecule type" value="Genomic_DNA"/>
</dbReference>
<dbReference type="RefSeq" id="XP_662299.1">
    <property type="nucleotide sequence ID" value="XM_657207.1"/>
</dbReference>
<dbReference type="SMR" id="Q9P8K9"/>
<dbReference type="STRING" id="227321.Q9P8K9"/>
<dbReference type="eggNOG" id="KOG3271">
    <property type="taxonomic scope" value="Eukaryota"/>
</dbReference>
<dbReference type="HOGENOM" id="CLU_021655_0_0_1"/>
<dbReference type="InParanoid" id="Q9P8K9"/>
<dbReference type="Proteomes" id="UP000000560">
    <property type="component" value="Chromosome III"/>
</dbReference>
<dbReference type="GO" id="GO:0030428">
    <property type="term" value="C:cell septum"/>
    <property type="evidence" value="ECO:0007669"/>
    <property type="project" value="UniProtKB-SubCell"/>
</dbReference>
<dbReference type="GO" id="GO:0140266">
    <property type="term" value="C:Woronin body"/>
    <property type="evidence" value="ECO:0000250"/>
    <property type="project" value="GO_Central"/>
</dbReference>
<dbReference type="GO" id="GO:0043022">
    <property type="term" value="F:ribosome binding"/>
    <property type="evidence" value="ECO:0007669"/>
    <property type="project" value="InterPro"/>
</dbReference>
<dbReference type="GO" id="GO:0003723">
    <property type="term" value="F:RNA binding"/>
    <property type="evidence" value="ECO:0007669"/>
    <property type="project" value="InterPro"/>
</dbReference>
<dbReference type="GO" id="GO:0003746">
    <property type="term" value="F:translation elongation factor activity"/>
    <property type="evidence" value="ECO:0000318"/>
    <property type="project" value="GO_Central"/>
</dbReference>
<dbReference type="GO" id="GO:0045901">
    <property type="term" value="P:positive regulation of translational elongation"/>
    <property type="evidence" value="ECO:0007669"/>
    <property type="project" value="InterPro"/>
</dbReference>
<dbReference type="GO" id="GO:0006414">
    <property type="term" value="P:translational elongation"/>
    <property type="evidence" value="ECO:0000318"/>
    <property type="project" value="GO_Central"/>
</dbReference>
<dbReference type="CDD" id="cd04469">
    <property type="entry name" value="S1_Hex1"/>
    <property type="match status" value="1"/>
</dbReference>
<dbReference type="Gene3D" id="2.30.30.30">
    <property type="match status" value="1"/>
</dbReference>
<dbReference type="Gene3D" id="2.40.50.140">
    <property type="entry name" value="Nucleic acid-binding proteins"/>
    <property type="match status" value="1"/>
</dbReference>
<dbReference type="InterPro" id="IPR037318">
    <property type="entry name" value="Hex1_S1"/>
</dbReference>
<dbReference type="InterPro" id="IPR001884">
    <property type="entry name" value="IF5A-like"/>
</dbReference>
<dbReference type="InterPro" id="IPR012340">
    <property type="entry name" value="NA-bd_OB-fold"/>
</dbReference>
<dbReference type="InterPro" id="IPR014722">
    <property type="entry name" value="Rib_uL2_dom2"/>
</dbReference>
<dbReference type="InterPro" id="IPR008991">
    <property type="entry name" value="Translation_prot_SH3-like_sf"/>
</dbReference>
<dbReference type="PANTHER" id="PTHR11673">
    <property type="entry name" value="TRANSLATION INITIATION FACTOR 5A FAMILY MEMBER"/>
    <property type="match status" value="1"/>
</dbReference>
<dbReference type="SUPFAM" id="SSF50249">
    <property type="entry name" value="Nucleic acid-binding proteins"/>
    <property type="match status" value="1"/>
</dbReference>
<dbReference type="SUPFAM" id="SSF50104">
    <property type="entry name" value="Translation proteins SH3-like domain"/>
    <property type="match status" value="1"/>
</dbReference>
<keyword id="KW-1185">Reference proteome</keyword>
<proteinExistence type="evidence at transcript level"/>
<gene>
    <name evidence="4" type="primary">hex1</name>
    <name type="ORF">AN4695</name>
</gene>
<feature type="chain" id="PRO_0000142508" description="Woronin body major protein">
    <location>
        <begin position="1"/>
        <end position="221"/>
    </location>
</feature>
<feature type="short sequence motif" description="Microbody targeting signal" evidence="2">
    <location>
        <begin position="219"/>
        <end position="221"/>
    </location>
</feature>